<dbReference type="EC" id="6.2.1.5" evidence="1"/>
<dbReference type="EMBL" id="AE003849">
    <property type="protein sequence ID" value="AAF85344.1"/>
    <property type="molecule type" value="Genomic_DNA"/>
</dbReference>
<dbReference type="PIR" id="C82545">
    <property type="entry name" value="C82545"/>
</dbReference>
<dbReference type="RefSeq" id="WP_010894968.1">
    <property type="nucleotide sequence ID" value="NC_002488.3"/>
</dbReference>
<dbReference type="SMR" id="Q9PAH1"/>
<dbReference type="STRING" id="160492.XF_2547"/>
<dbReference type="KEGG" id="xfa:XF_2547"/>
<dbReference type="eggNOG" id="COG0045">
    <property type="taxonomic scope" value="Bacteria"/>
</dbReference>
<dbReference type="HOGENOM" id="CLU_037430_0_2_6"/>
<dbReference type="UniPathway" id="UPA00223">
    <property type="reaction ID" value="UER00999"/>
</dbReference>
<dbReference type="Proteomes" id="UP000000812">
    <property type="component" value="Chromosome"/>
</dbReference>
<dbReference type="GO" id="GO:0042709">
    <property type="term" value="C:succinate-CoA ligase complex"/>
    <property type="evidence" value="ECO:0007669"/>
    <property type="project" value="TreeGrafter"/>
</dbReference>
<dbReference type="GO" id="GO:0005524">
    <property type="term" value="F:ATP binding"/>
    <property type="evidence" value="ECO:0007669"/>
    <property type="project" value="UniProtKB-UniRule"/>
</dbReference>
<dbReference type="GO" id="GO:0000287">
    <property type="term" value="F:magnesium ion binding"/>
    <property type="evidence" value="ECO:0007669"/>
    <property type="project" value="UniProtKB-UniRule"/>
</dbReference>
<dbReference type="GO" id="GO:0004775">
    <property type="term" value="F:succinate-CoA ligase (ADP-forming) activity"/>
    <property type="evidence" value="ECO:0007669"/>
    <property type="project" value="UniProtKB-UniRule"/>
</dbReference>
<dbReference type="GO" id="GO:0004776">
    <property type="term" value="F:succinate-CoA ligase (GDP-forming) activity"/>
    <property type="evidence" value="ECO:0007669"/>
    <property type="project" value="RHEA"/>
</dbReference>
<dbReference type="GO" id="GO:0006104">
    <property type="term" value="P:succinyl-CoA metabolic process"/>
    <property type="evidence" value="ECO:0007669"/>
    <property type="project" value="TreeGrafter"/>
</dbReference>
<dbReference type="GO" id="GO:0006099">
    <property type="term" value="P:tricarboxylic acid cycle"/>
    <property type="evidence" value="ECO:0007669"/>
    <property type="project" value="UniProtKB-UniRule"/>
</dbReference>
<dbReference type="FunFam" id="3.30.1490.20:FF:000002">
    <property type="entry name" value="Succinate--CoA ligase [ADP-forming] subunit beta"/>
    <property type="match status" value="1"/>
</dbReference>
<dbReference type="FunFam" id="3.30.470.20:FF:000002">
    <property type="entry name" value="Succinate--CoA ligase [ADP-forming] subunit beta"/>
    <property type="match status" value="1"/>
</dbReference>
<dbReference type="FunFam" id="3.40.50.261:FF:000001">
    <property type="entry name" value="Succinate--CoA ligase [ADP-forming] subunit beta"/>
    <property type="match status" value="1"/>
</dbReference>
<dbReference type="Gene3D" id="3.30.1490.20">
    <property type="entry name" value="ATP-grasp fold, A domain"/>
    <property type="match status" value="1"/>
</dbReference>
<dbReference type="Gene3D" id="3.30.470.20">
    <property type="entry name" value="ATP-grasp fold, B domain"/>
    <property type="match status" value="1"/>
</dbReference>
<dbReference type="Gene3D" id="3.40.50.261">
    <property type="entry name" value="Succinyl-CoA synthetase domains"/>
    <property type="match status" value="1"/>
</dbReference>
<dbReference type="HAMAP" id="MF_00558">
    <property type="entry name" value="Succ_CoA_beta"/>
    <property type="match status" value="1"/>
</dbReference>
<dbReference type="InterPro" id="IPR011761">
    <property type="entry name" value="ATP-grasp"/>
</dbReference>
<dbReference type="InterPro" id="IPR013650">
    <property type="entry name" value="ATP-grasp_succ-CoA_synth-type"/>
</dbReference>
<dbReference type="InterPro" id="IPR013815">
    <property type="entry name" value="ATP_grasp_subdomain_1"/>
</dbReference>
<dbReference type="InterPro" id="IPR017866">
    <property type="entry name" value="Succ-CoA_synthase_bsu_CS"/>
</dbReference>
<dbReference type="InterPro" id="IPR005811">
    <property type="entry name" value="SUCC_ACL_C"/>
</dbReference>
<dbReference type="InterPro" id="IPR005809">
    <property type="entry name" value="Succ_CoA_ligase-like_bsu"/>
</dbReference>
<dbReference type="InterPro" id="IPR016102">
    <property type="entry name" value="Succinyl-CoA_synth-like"/>
</dbReference>
<dbReference type="NCBIfam" id="NF001913">
    <property type="entry name" value="PRK00696.1"/>
    <property type="match status" value="1"/>
</dbReference>
<dbReference type="NCBIfam" id="TIGR01016">
    <property type="entry name" value="sucCoAbeta"/>
    <property type="match status" value="1"/>
</dbReference>
<dbReference type="PANTHER" id="PTHR11815:SF10">
    <property type="entry name" value="SUCCINATE--COA LIGASE [GDP-FORMING] SUBUNIT BETA, MITOCHONDRIAL"/>
    <property type="match status" value="1"/>
</dbReference>
<dbReference type="PANTHER" id="PTHR11815">
    <property type="entry name" value="SUCCINYL-COA SYNTHETASE BETA CHAIN"/>
    <property type="match status" value="1"/>
</dbReference>
<dbReference type="Pfam" id="PF08442">
    <property type="entry name" value="ATP-grasp_2"/>
    <property type="match status" value="1"/>
</dbReference>
<dbReference type="Pfam" id="PF00549">
    <property type="entry name" value="Ligase_CoA"/>
    <property type="match status" value="1"/>
</dbReference>
<dbReference type="PIRSF" id="PIRSF001554">
    <property type="entry name" value="SucCS_beta"/>
    <property type="match status" value="1"/>
</dbReference>
<dbReference type="SUPFAM" id="SSF56059">
    <property type="entry name" value="Glutathione synthetase ATP-binding domain-like"/>
    <property type="match status" value="1"/>
</dbReference>
<dbReference type="SUPFAM" id="SSF52210">
    <property type="entry name" value="Succinyl-CoA synthetase domains"/>
    <property type="match status" value="1"/>
</dbReference>
<dbReference type="PROSITE" id="PS50975">
    <property type="entry name" value="ATP_GRASP"/>
    <property type="match status" value="1"/>
</dbReference>
<dbReference type="PROSITE" id="PS01217">
    <property type="entry name" value="SUCCINYL_COA_LIG_3"/>
    <property type="match status" value="1"/>
</dbReference>
<name>SUCC_XYLFA</name>
<keyword id="KW-0067">ATP-binding</keyword>
<keyword id="KW-0436">Ligase</keyword>
<keyword id="KW-0460">Magnesium</keyword>
<keyword id="KW-0479">Metal-binding</keyword>
<keyword id="KW-0547">Nucleotide-binding</keyword>
<keyword id="KW-0816">Tricarboxylic acid cycle</keyword>
<sequence>MNFHEYQAKQLFAEYGIPVPAGRIASSADEAVTAAKSLGNGPWMVKAQIHAGGRGKAGGVKFCKTTDEVKQAAAAMLGTKMATYQSAGVALPVNLVLVTEAGEITKELYLSVLVDRGTRSITYIASSEGGVDIEHVAAETPEKIQTLNVDFVEGLQPYQGRDIGFHLGLEAKQVNQLSKIMISLYQLFNDKDLSLIELNPLAILSNGDLYALDGKINSDDNATFRHKELAAMRDKTQEDETEVLASENDLNYVTMDGNIGCMVNGAGLAMATMDVIKLNGGEPANFLDVGGGATKERVTTAFKLILSSNKVKAIFVNIFGGIVRCDMIAEGIIAAVKEVGVKVPVIVRLEGTNVDAGKQLLATSGLAIIPADDINDGAKKAVAAVTV</sequence>
<accession>Q9PAH1</accession>
<gene>
    <name evidence="1" type="primary">sucC</name>
    <name type="ordered locus">XF_2547</name>
</gene>
<comment type="function">
    <text evidence="1">Succinyl-CoA synthetase functions in the citric acid cycle (TCA), coupling the hydrolysis of succinyl-CoA to the synthesis of either ATP or GTP and thus represents the only step of substrate-level phosphorylation in the TCA. The beta subunit provides nucleotide specificity of the enzyme and binds the substrate succinate, while the binding sites for coenzyme A and phosphate are found in the alpha subunit.</text>
</comment>
<comment type="catalytic activity">
    <reaction evidence="1">
        <text>succinate + ATP + CoA = succinyl-CoA + ADP + phosphate</text>
        <dbReference type="Rhea" id="RHEA:17661"/>
        <dbReference type="ChEBI" id="CHEBI:30031"/>
        <dbReference type="ChEBI" id="CHEBI:30616"/>
        <dbReference type="ChEBI" id="CHEBI:43474"/>
        <dbReference type="ChEBI" id="CHEBI:57287"/>
        <dbReference type="ChEBI" id="CHEBI:57292"/>
        <dbReference type="ChEBI" id="CHEBI:456216"/>
        <dbReference type="EC" id="6.2.1.5"/>
    </reaction>
    <physiologicalReaction direction="right-to-left" evidence="1">
        <dbReference type="Rhea" id="RHEA:17663"/>
    </physiologicalReaction>
</comment>
<comment type="catalytic activity">
    <reaction evidence="1">
        <text>GTP + succinate + CoA = succinyl-CoA + GDP + phosphate</text>
        <dbReference type="Rhea" id="RHEA:22120"/>
        <dbReference type="ChEBI" id="CHEBI:30031"/>
        <dbReference type="ChEBI" id="CHEBI:37565"/>
        <dbReference type="ChEBI" id="CHEBI:43474"/>
        <dbReference type="ChEBI" id="CHEBI:57287"/>
        <dbReference type="ChEBI" id="CHEBI:57292"/>
        <dbReference type="ChEBI" id="CHEBI:58189"/>
    </reaction>
    <physiologicalReaction direction="right-to-left" evidence="1">
        <dbReference type="Rhea" id="RHEA:22122"/>
    </physiologicalReaction>
</comment>
<comment type="cofactor">
    <cofactor evidence="1">
        <name>Mg(2+)</name>
        <dbReference type="ChEBI" id="CHEBI:18420"/>
    </cofactor>
    <text evidence="1">Binds 1 Mg(2+) ion per subunit.</text>
</comment>
<comment type="pathway">
    <text evidence="1">Carbohydrate metabolism; tricarboxylic acid cycle; succinate from succinyl-CoA (ligase route): step 1/1.</text>
</comment>
<comment type="subunit">
    <text evidence="1">Heterotetramer of two alpha and two beta subunits.</text>
</comment>
<comment type="similarity">
    <text evidence="1">Belongs to the succinate/malate CoA ligase beta subunit family.</text>
</comment>
<reference key="1">
    <citation type="journal article" date="2000" name="Nature">
        <title>The genome sequence of the plant pathogen Xylella fastidiosa.</title>
        <authorList>
            <person name="Simpson A.J.G."/>
            <person name="Reinach F.C."/>
            <person name="Arruda P."/>
            <person name="Abreu F.A."/>
            <person name="Acencio M."/>
            <person name="Alvarenga R."/>
            <person name="Alves L.M.C."/>
            <person name="Araya J.E."/>
            <person name="Baia G.S."/>
            <person name="Baptista C.S."/>
            <person name="Barros M.H."/>
            <person name="Bonaccorsi E.D."/>
            <person name="Bordin S."/>
            <person name="Bove J.M."/>
            <person name="Briones M.R.S."/>
            <person name="Bueno M.R.P."/>
            <person name="Camargo A.A."/>
            <person name="Camargo L.E.A."/>
            <person name="Carraro D.M."/>
            <person name="Carrer H."/>
            <person name="Colauto N.B."/>
            <person name="Colombo C."/>
            <person name="Costa F.F."/>
            <person name="Costa M.C.R."/>
            <person name="Costa-Neto C.M."/>
            <person name="Coutinho L.L."/>
            <person name="Cristofani M."/>
            <person name="Dias-Neto E."/>
            <person name="Docena C."/>
            <person name="El-Dorry H."/>
            <person name="Facincani A.P."/>
            <person name="Ferreira A.J.S."/>
            <person name="Ferreira V.C.A."/>
            <person name="Ferro J.A."/>
            <person name="Fraga J.S."/>
            <person name="Franca S.C."/>
            <person name="Franco M.C."/>
            <person name="Frohme M."/>
            <person name="Furlan L.R."/>
            <person name="Garnier M."/>
            <person name="Goldman G.H."/>
            <person name="Goldman M.H.S."/>
            <person name="Gomes S.L."/>
            <person name="Gruber A."/>
            <person name="Ho P.L."/>
            <person name="Hoheisel J.D."/>
            <person name="Junqueira M.L."/>
            <person name="Kemper E.L."/>
            <person name="Kitajima J.P."/>
            <person name="Krieger J.E."/>
            <person name="Kuramae E.E."/>
            <person name="Laigret F."/>
            <person name="Lambais M.R."/>
            <person name="Leite L.C.C."/>
            <person name="Lemos E.G.M."/>
            <person name="Lemos M.V.F."/>
            <person name="Lopes S.A."/>
            <person name="Lopes C.R."/>
            <person name="Machado J.A."/>
            <person name="Machado M.A."/>
            <person name="Madeira A.M.B.N."/>
            <person name="Madeira H.M.F."/>
            <person name="Marino C.L."/>
            <person name="Marques M.V."/>
            <person name="Martins E.A.L."/>
            <person name="Martins E.M.F."/>
            <person name="Matsukuma A.Y."/>
            <person name="Menck C.F.M."/>
            <person name="Miracca E.C."/>
            <person name="Miyaki C.Y."/>
            <person name="Monteiro-Vitorello C.B."/>
            <person name="Moon D.H."/>
            <person name="Nagai M.A."/>
            <person name="Nascimento A.L.T.O."/>
            <person name="Netto L.E.S."/>
            <person name="Nhani A. Jr."/>
            <person name="Nobrega F.G."/>
            <person name="Nunes L.R."/>
            <person name="Oliveira M.A."/>
            <person name="de Oliveira M.C."/>
            <person name="de Oliveira R.C."/>
            <person name="Palmieri D.A."/>
            <person name="Paris A."/>
            <person name="Peixoto B.R."/>
            <person name="Pereira G.A.G."/>
            <person name="Pereira H.A. Jr."/>
            <person name="Pesquero J.B."/>
            <person name="Quaggio R.B."/>
            <person name="Roberto P.G."/>
            <person name="Rodrigues V."/>
            <person name="de Rosa A.J.M."/>
            <person name="de Rosa V.E. Jr."/>
            <person name="de Sa R.G."/>
            <person name="Santelli R.V."/>
            <person name="Sawasaki H.E."/>
            <person name="da Silva A.C.R."/>
            <person name="da Silva A.M."/>
            <person name="da Silva F.R."/>
            <person name="Silva W.A. Jr."/>
            <person name="da Silveira J.F."/>
            <person name="Silvestri M.L.Z."/>
            <person name="Siqueira W.J."/>
            <person name="de Souza A.A."/>
            <person name="de Souza A.P."/>
            <person name="Terenzi M.F."/>
            <person name="Truffi D."/>
            <person name="Tsai S.M."/>
            <person name="Tsuhako M.H."/>
            <person name="Vallada H."/>
            <person name="Van Sluys M.A."/>
            <person name="Verjovski-Almeida S."/>
            <person name="Vettore A.L."/>
            <person name="Zago M.A."/>
            <person name="Zatz M."/>
            <person name="Meidanis J."/>
            <person name="Setubal J.C."/>
        </authorList>
    </citation>
    <scope>NUCLEOTIDE SEQUENCE [LARGE SCALE GENOMIC DNA]</scope>
    <source>
        <strain>9a5c</strain>
    </source>
</reference>
<evidence type="ECO:0000255" key="1">
    <source>
        <dbReference type="HAMAP-Rule" id="MF_00558"/>
    </source>
</evidence>
<proteinExistence type="inferred from homology"/>
<organism>
    <name type="scientific">Xylella fastidiosa (strain 9a5c)</name>
    <dbReference type="NCBI Taxonomy" id="160492"/>
    <lineage>
        <taxon>Bacteria</taxon>
        <taxon>Pseudomonadati</taxon>
        <taxon>Pseudomonadota</taxon>
        <taxon>Gammaproteobacteria</taxon>
        <taxon>Lysobacterales</taxon>
        <taxon>Lysobacteraceae</taxon>
        <taxon>Xylella</taxon>
    </lineage>
</organism>
<protein>
    <recommendedName>
        <fullName evidence="1">Succinate--CoA ligase [ADP-forming] subunit beta</fullName>
        <ecNumber evidence="1">6.2.1.5</ecNumber>
    </recommendedName>
    <alternativeName>
        <fullName evidence="1">Succinyl-CoA synthetase subunit beta</fullName>
        <shortName evidence="1">SCS-beta</shortName>
    </alternativeName>
</protein>
<feature type="chain" id="PRO_0000102878" description="Succinate--CoA ligase [ADP-forming] subunit beta">
    <location>
        <begin position="1"/>
        <end position="387"/>
    </location>
</feature>
<feature type="domain" description="ATP-grasp" evidence="1">
    <location>
        <begin position="9"/>
        <end position="244"/>
    </location>
</feature>
<feature type="binding site" evidence="1">
    <location>
        <position position="46"/>
    </location>
    <ligand>
        <name>ATP</name>
        <dbReference type="ChEBI" id="CHEBI:30616"/>
    </ligand>
</feature>
<feature type="binding site" evidence="1">
    <location>
        <begin position="53"/>
        <end position="55"/>
    </location>
    <ligand>
        <name>ATP</name>
        <dbReference type="ChEBI" id="CHEBI:30616"/>
    </ligand>
</feature>
<feature type="binding site" evidence="1">
    <location>
        <position position="102"/>
    </location>
    <ligand>
        <name>ATP</name>
        <dbReference type="ChEBI" id="CHEBI:30616"/>
    </ligand>
</feature>
<feature type="binding site" evidence="1">
    <location>
        <position position="107"/>
    </location>
    <ligand>
        <name>ATP</name>
        <dbReference type="ChEBI" id="CHEBI:30616"/>
    </ligand>
</feature>
<feature type="binding site" evidence="1">
    <location>
        <position position="199"/>
    </location>
    <ligand>
        <name>Mg(2+)</name>
        <dbReference type="ChEBI" id="CHEBI:18420"/>
    </ligand>
</feature>
<feature type="binding site" evidence="1">
    <location>
        <position position="213"/>
    </location>
    <ligand>
        <name>Mg(2+)</name>
        <dbReference type="ChEBI" id="CHEBI:18420"/>
    </ligand>
</feature>
<feature type="binding site" evidence="1">
    <location>
        <position position="264"/>
    </location>
    <ligand>
        <name>substrate</name>
        <note>ligand shared with subunit alpha</note>
    </ligand>
</feature>
<feature type="binding site" evidence="1">
    <location>
        <begin position="321"/>
        <end position="323"/>
    </location>
    <ligand>
        <name>substrate</name>
        <note>ligand shared with subunit alpha</note>
    </ligand>
</feature>